<accession>P18155</accession>
<accession>Q3TMN4</accession>
<comment type="function">
    <text evidence="1">Although its dehydrogenase activity is NAD-specific, it can also utilize NADP at a reduced efficiency.</text>
</comment>
<comment type="catalytic activity">
    <reaction evidence="2 3">
        <text>(6R)-5,10-methylene-5,6,7,8-tetrahydrofolate + NAD(+) = (6R)-5,10-methenyltetrahydrofolate + NADH</text>
        <dbReference type="Rhea" id="RHEA:22892"/>
        <dbReference type="ChEBI" id="CHEBI:15636"/>
        <dbReference type="ChEBI" id="CHEBI:57455"/>
        <dbReference type="ChEBI" id="CHEBI:57540"/>
        <dbReference type="ChEBI" id="CHEBI:57945"/>
        <dbReference type="EC" id="1.5.1.15"/>
    </reaction>
</comment>
<comment type="catalytic activity">
    <reaction evidence="2 3">
        <text>(6R)-5,10-methenyltetrahydrofolate + H2O = (6R)-10-formyltetrahydrofolate + H(+)</text>
        <dbReference type="Rhea" id="RHEA:23700"/>
        <dbReference type="ChEBI" id="CHEBI:15377"/>
        <dbReference type="ChEBI" id="CHEBI:15378"/>
        <dbReference type="ChEBI" id="CHEBI:57455"/>
        <dbReference type="ChEBI" id="CHEBI:195366"/>
        <dbReference type="EC" id="3.5.4.9"/>
    </reaction>
</comment>
<comment type="cofactor">
    <cofactor evidence="3">
        <name>Mg(2+)</name>
        <dbReference type="ChEBI" id="CHEBI:18420"/>
    </cofactor>
</comment>
<comment type="subunit">
    <text evidence="1">Homodimer.</text>
</comment>
<comment type="subcellular location">
    <subcellularLocation>
        <location>Mitochondrion</location>
    </subcellularLocation>
</comment>
<comment type="miscellaneous">
    <text>This NAD-dependent bifunctional enzyme has very different kinetic properties than the larger NADP-dependent trifunctional enzyme and is unique in that it requires formation of an enzyme-magnesium complex to allow binding of NAD.</text>
</comment>
<comment type="similarity">
    <text evidence="4">Belongs to the tetrahydrofolate dehydrogenase/cyclohydrolase family.</text>
</comment>
<reference key="1">
    <citation type="journal article" date="1989" name="J. Biol. Chem.">
        <title>Isolation and characterization of cDNA clones encoding the murine NAD-dependent methylenetetrahydrofolate dehydrogenase-methenyltetrahydrofolate cyclohydrolase.</title>
        <authorList>
            <person name="Belanger C."/>
            <person name="Mackenzie R.E."/>
        </authorList>
    </citation>
    <scope>NUCLEOTIDE SEQUENCE [MRNA]</scope>
    <scope>PROTEIN SEQUENCE OF 36-55</scope>
    <scope>CATALYTIC ACTIVITY</scope>
</reference>
<reference key="2">
    <citation type="journal article" date="1991" name="Gene">
        <title>Structural organization of the murine gene encoding NAD-dependent methylenetetrahydrofolate dehydrogenase-methenyltetrahydrofolate cyclohydrolase.</title>
        <authorList>
            <person name="Belanger C."/>
            <person name="Mackenzie R.E."/>
        </authorList>
    </citation>
    <scope>NUCLEOTIDE SEQUENCE [GENOMIC DNA]</scope>
</reference>
<reference key="3">
    <citation type="journal article" date="2005" name="Science">
        <title>The transcriptional landscape of the mammalian genome.</title>
        <authorList>
            <person name="Carninci P."/>
            <person name="Kasukawa T."/>
            <person name="Katayama S."/>
            <person name="Gough J."/>
            <person name="Frith M.C."/>
            <person name="Maeda N."/>
            <person name="Oyama R."/>
            <person name="Ravasi T."/>
            <person name="Lenhard B."/>
            <person name="Wells C."/>
            <person name="Kodzius R."/>
            <person name="Shimokawa K."/>
            <person name="Bajic V.B."/>
            <person name="Brenner S.E."/>
            <person name="Batalov S."/>
            <person name="Forrest A.R."/>
            <person name="Zavolan M."/>
            <person name="Davis M.J."/>
            <person name="Wilming L.G."/>
            <person name="Aidinis V."/>
            <person name="Allen J.E."/>
            <person name="Ambesi-Impiombato A."/>
            <person name="Apweiler R."/>
            <person name="Aturaliya R.N."/>
            <person name="Bailey T.L."/>
            <person name="Bansal M."/>
            <person name="Baxter L."/>
            <person name="Beisel K.W."/>
            <person name="Bersano T."/>
            <person name="Bono H."/>
            <person name="Chalk A.M."/>
            <person name="Chiu K.P."/>
            <person name="Choudhary V."/>
            <person name="Christoffels A."/>
            <person name="Clutterbuck D.R."/>
            <person name="Crowe M.L."/>
            <person name="Dalla E."/>
            <person name="Dalrymple B.P."/>
            <person name="de Bono B."/>
            <person name="Della Gatta G."/>
            <person name="di Bernardo D."/>
            <person name="Down T."/>
            <person name="Engstrom P."/>
            <person name="Fagiolini M."/>
            <person name="Faulkner G."/>
            <person name="Fletcher C.F."/>
            <person name="Fukushima T."/>
            <person name="Furuno M."/>
            <person name="Futaki S."/>
            <person name="Gariboldi M."/>
            <person name="Georgii-Hemming P."/>
            <person name="Gingeras T.R."/>
            <person name="Gojobori T."/>
            <person name="Green R.E."/>
            <person name="Gustincich S."/>
            <person name="Harbers M."/>
            <person name="Hayashi Y."/>
            <person name="Hensch T.K."/>
            <person name="Hirokawa N."/>
            <person name="Hill D."/>
            <person name="Huminiecki L."/>
            <person name="Iacono M."/>
            <person name="Ikeo K."/>
            <person name="Iwama A."/>
            <person name="Ishikawa T."/>
            <person name="Jakt M."/>
            <person name="Kanapin A."/>
            <person name="Katoh M."/>
            <person name="Kawasawa Y."/>
            <person name="Kelso J."/>
            <person name="Kitamura H."/>
            <person name="Kitano H."/>
            <person name="Kollias G."/>
            <person name="Krishnan S.P."/>
            <person name="Kruger A."/>
            <person name="Kummerfeld S.K."/>
            <person name="Kurochkin I.V."/>
            <person name="Lareau L.F."/>
            <person name="Lazarevic D."/>
            <person name="Lipovich L."/>
            <person name="Liu J."/>
            <person name="Liuni S."/>
            <person name="McWilliam S."/>
            <person name="Madan Babu M."/>
            <person name="Madera M."/>
            <person name="Marchionni L."/>
            <person name="Matsuda H."/>
            <person name="Matsuzawa S."/>
            <person name="Miki H."/>
            <person name="Mignone F."/>
            <person name="Miyake S."/>
            <person name="Morris K."/>
            <person name="Mottagui-Tabar S."/>
            <person name="Mulder N."/>
            <person name="Nakano N."/>
            <person name="Nakauchi H."/>
            <person name="Ng P."/>
            <person name="Nilsson R."/>
            <person name="Nishiguchi S."/>
            <person name="Nishikawa S."/>
            <person name="Nori F."/>
            <person name="Ohara O."/>
            <person name="Okazaki Y."/>
            <person name="Orlando V."/>
            <person name="Pang K.C."/>
            <person name="Pavan W.J."/>
            <person name="Pavesi G."/>
            <person name="Pesole G."/>
            <person name="Petrovsky N."/>
            <person name="Piazza S."/>
            <person name="Reed J."/>
            <person name="Reid J.F."/>
            <person name="Ring B.Z."/>
            <person name="Ringwald M."/>
            <person name="Rost B."/>
            <person name="Ruan Y."/>
            <person name="Salzberg S.L."/>
            <person name="Sandelin A."/>
            <person name="Schneider C."/>
            <person name="Schoenbach C."/>
            <person name="Sekiguchi K."/>
            <person name="Semple C.A."/>
            <person name="Seno S."/>
            <person name="Sessa L."/>
            <person name="Sheng Y."/>
            <person name="Shibata Y."/>
            <person name="Shimada H."/>
            <person name="Shimada K."/>
            <person name="Silva D."/>
            <person name="Sinclair B."/>
            <person name="Sperling S."/>
            <person name="Stupka E."/>
            <person name="Sugiura K."/>
            <person name="Sultana R."/>
            <person name="Takenaka Y."/>
            <person name="Taki K."/>
            <person name="Tammoja K."/>
            <person name="Tan S.L."/>
            <person name="Tang S."/>
            <person name="Taylor M.S."/>
            <person name="Tegner J."/>
            <person name="Teichmann S.A."/>
            <person name="Ueda H.R."/>
            <person name="van Nimwegen E."/>
            <person name="Verardo R."/>
            <person name="Wei C.L."/>
            <person name="Yagi K."/>
            <person name="Yamanishi H."/>
            <person name="Zabarovsky E."/>
            <person name="Zhu S."/>
            <person name="Zimmer A."/>
            <person name="Hide W."/>
            <person name="Bult C."/>
            <person name="Grimmond S.M."/>
            <person name="Teasdale R.D."/>
            <person name="Liu E.T."/>
            <person name="Brusic V."/>
            <person name="Quackenbush J."/>
            <person name="Wahlestedt C."/>
            <person name="Mattick J.S."/>
            <person name="Hume D.A."/>
            <person name="Kai C."/>
            <person name="Sasaki D."/>
            <person name="Tomaru Y."/>
            <person name="Fukuda S."/>
            <person name="Kanamori-Katayama M."/>
            <person name="Suzuki M."/>
            <person name="Aoki J."/>
            <person name="Arakawa T."/>
            <person name="Iida J."/>
            <person name="Imamura K."/>
            <person name="Itoh M."/>
            <person name="Kato T."/>
            <person name="Kawaji H."/>
            <person name="Kawagashira N."/>
            <person name="Kawashima T."/>
            <person name="Kojima M."/>
            <person name="Kondo S."/>
            <person name="Konno H."/>
            <person name="Nakano K."/>
            <person name="Ninomiya N."/>
            <person name="Nishio T."/>
            <person name="Okada M."/>
            <person name="Plessy C."/>
            <person name="Shibata K."/>
            <person name="Shiraki T."/>
            <person name="Suzuki S."/>
            <person name="Tagami M."/>
            <person name="Waki K."/>
            <person name="Watahiki A."/>
            <person name="Okamura-Oho Y."/>
            <person name="Suzuki H."/>
            <person name="Kawai J."/>
            <person name="Hayashizaki Y."/>
        </authorList>
    </citation>
    <scope>NUCLEOTIDE SEQUENCE [LARGE SCALE MRNA]</scope>
    <source>
        <strain>C57BL/6J</strain>
    </source>
</reference>
<reference key="4">
    <citation type="journal article" date="2004" name="Genome Res.">
        <title>The status, quality, and expansion of the NIH full-length cDNA project: the Mammalian Gene Collection (MGC).</title>
        <authorList>
            <consortium name="The MGC Project Team"/>
        </authorList>
    </citation>
    <scope>NUCLEOTIDE SEQUENCE [LARGE SCALE MRNA]</scope>
    <source>
        <strain>FVB/N</strain>
        <tissue>Salivary gland</tissue>
    </source>
</reference>
<reference key="5">
    <citation type="journal article" date="1991" name="Nucleic Acids Res.">
        <title>Analysis of the promoter region of the gene encoding NAD-dependent methylenetetrahydrofolate dehydrogenase-methenyltetrahydrofolate cyclohydrolase.</title>
        <authorList>
            <person name="Belanger C."/>
            <person name="Peri K.G."/>
            <person name="Mackenzie R.E."/>
        </authorList>
    </citation>
    <scope>NUCLEOTIDE SEQUENCE [GENOMIC DNA] OF 1-34</scope>
</reference>
<reference key="6">
    <citation type="journal article" date="1986" name="J. Biol. Chem.">
        <title>NAD-dependent methylenetetrahydrofolate dehydrogenase-methenyltetrahydrofolate cyclohydrolase from ascites tumor cells. Purification and properties.</title>
        <authorList>
            <person name="Mejia N.R."/>
            <person name="Rios-Orlandi E.M."/>
            <person name="MacKenzie R.E."/>
        </authorList>
    </citation>
    <scope>IDENTIFICATION</scope>
    <scope>CATALYTIC ACTIVITY</scope>
    <scope>COFACTOR</scope>
</reference>
<reference key="7">
    <citation type="journal article" date="2010" name="Cell">
        <title>A tissue-specific atlas of mouse protein phosphorylation and expression.</title>
        <authorList>
            <person name="Huttlin E.L."/>
            <person name="Jedrychowski M.P."/>
            <person name="Elias J.E."/>
            <person name="Goswami T."/>
            <person name="Rad R."/>
            <person name="Beausoleil S.A."/>
            <person name="Villen J."/>
            <person name="Haas W."/>
            <person name="Sowa M.E."/>
            <person name="Gygi S.P."/>
        </authorList>
    </citation>
    <scope>IDENTIFICATION BY MASS SPECTROMETRY [LARGE SCALE ANALYSIS]</scope>
    <source>
        <tissue>Pancreas</tissue>
        <tissue>Spleen</tissue>
        <tissue>Testis</tissue>
    </source>
</reference>
<gene>
    <name type="primary">Mthfd2</name>
    <name type="synonym">Nmdmc</name>
</gene>
<organism>
    <name type="scientific">Mus musculus</name>
    <name type="common">Mouse</name>
    <dbReference type="NCBI Taxonomy" id="10090"/>
    <lineage>
        <taxon>Eukaryota</taxon>
        <taxon>Metazoa</taxon>
        <taxon>Chordata</taxon>
        <taxon>Craniata</taxon>
        <taxon>Vertebrata</taxon>
        <taxon>Euteleostomi</taxon>
        <taxon>Mammalia</taxon>
        <taxon>Eutheria</taxon>
        <taxon>Euarchontoglires</taxon>
        <taxon>Glires</taxon>
        <taxon>Rodentia</taxon>
        <taxon>Myomorpha</taxon>
        <taxon>Muroidea</taxon>
        <taxon>Muridae</taxon>
        <taxon>Murinae</taxon>
        <taxon>Mus</taxon>
        <taxon>Mus</taxon>
    </lineage>
</organism>
<protein>
    <recommendedName>
        <fullName>Bifunctional methylenetetrahydrofolate dehydrogenase/cyclohydrolase, mitochondrial</fullName>
    </recommendedName>
    <domain>
        <recommendedName>
            <fullName>NAD-dependent methylenetetrahydrofolate dehydrogenase</fullName>
            <ecNumber evidence="2 3">1.5.1.15</ecNumber>
        </recommendedName>
    </domain>
    <domain>
        <recommendedName>
            <fullName>Methenyltetrahydrofolate cyclohydrolase</fullName>
            <ecNumber evidence="2 3">3.5.4.9</ecNumber>
        </recommendedName>
    </domain>
</protein>
<proteinExistence type="evidence at protein level"/>
<keyword id="KW-0007">Acetylation</keyword>
<keyword id="KW-0903">Direct protein sequencing</keyword>
<keyword id="KW-0378">Hydrolase</keyword>
<keyword id="KW-1017">Isopeptide bond</keyword>
<keyword id="KW-0460">Magnesium</keyword>
<keyword id="KW-0496">Mitochondrion</keyword>
<keyword id="KW-0511">Multifunctional enzyme</keyword>
<keyword id="KW-0520">NAD</keyword>
<keyword id="KW-0521">NADP</keyword>
<keyword id="KW-0554">One-carbon metabolism</keyword>
<keyword id="KW-0560">Oxidoreductase</keyword>
<keyword id="KW-1185">Reference proteome</keyword>
<keyword id="KW-0809">Transit peptide</keyword>
<keyword id="KW-0832">Ubl conjugation</keyword>
<feature type="transit peptide" description="Mitochondrion" evidence="2">
    <location>
        <begin position="1"/>
        <end position="35"/>
    </location>
</feature>
<feature type="chain" id="PRO_0000034050" description="Bifunctional methylenetetrahydrofolate dehydrogenase/cyclohydrolase, mitochondrial">
    <location>
        <begin position="36"/>
        <end position="350"/>
    </location>
</feature>
<feature type="binding site" evidence="1">
    <location>
        <begin position="84"/>
        <end position="88"/>
    </location>
    <ligand>
        <name>substrate</name>
    </ligand>
</feature>
<feature type="binding site" evidence="1">
    <location>
        <begin position="131"/>
        <end position="133"/>
    </location>
    <ligand>
        <name>substrate</name>
    </ligand>
</feature>
<feature type="binding site" evidence="1">
    <location>
        <begin position="200"/>
        <end position="202"/>
    </location>
    <ligand>
        <name>NAD(+)</name>
        <dbReference type="ChEBI" id="CHEBI:57540"/>
    </ligand>
</feature>
<feature type="binding site" evidence="1">
    <location>
        <position position="233"/>
    </location>
    <ligand>
        <name>NAD(+)</name>
        <dbReference type="ChEBI" id="CHEBI:57540"/>
    </ligand>
</feature>
<feature type="binding site" evidence="1">
    <location>
        <begin position="309"/>
        <end position="313"/>
    </location>
    <ligand>
        <name>substrate</name>
    </ligand>
</feature>
<feature type="modified residue" description="N6-acetyllysine; alternate" evidence="1">
    <location>
        <position position="50"/>
    </location>
</feature>
<feature type="cross-link" description="Glycyl lysine isopeptide (Lys-Gly) (interchain with G-Cter in SUMO2); alternate" evidence="1">
    <location>
        <position position="50"/>
    </location>
</feature>
<name>MTDC_MOUSE</name>
<evidence type="ECO:0000250" key="1">
    <source>
        <dbReference type="UniProtKB" id="P13995"/>
    </source>
</evidence>
<evidence type="ECO:0000269" key="2">
    <source>
    </source>
</evidence>
<evidence type="ECO:0000269" key="3">
    <source>
    </source>
</evidence>
<evidence type="ECO:0000305" key="4"/>
<dbReference type="EC" id="1.5.1.15" evidence="2 3"/>
<dbReference type="EC" id="3.5.4.9" evidence="2 3"/>
<dbReference type="EMBL" id="J04627">
    <property type="protein sequence ID" value="AAA39827.1"/>
    <property type="molecule type" value="mRNA"/>
</dbReference>
<dbReference type="EMBL" id="M63445">
    <property type="protein sequence ID" value="AAA39828.1"/>
    <property type="molecule type" value="Genomic_DNA"/>
</dbReference>
<dbReference type="EMBL" id="M63415">
    <property type="protein sequence ID" value="AAA39828.1"/>
    <property type="status" value="JOINED"/>
    <property type="molecule type" value="Genomic_DNA"/>
</dbReference>
<dbReference type="EMBL" id="M63439">
    <property type="protein sequence ID" value="AAA39828.1"/>
    <property type="status" value="JOINED"/>
    <property type="molecule type" value="Genomic_DNA"/>
</dbReference>
<dbReference type="EMBL" id="M63440">
    <property type="protein sequence ID" value="AAA39828.1"/>
    <property type="status" value="JOINED"/>
    <property type="molecule type" value="Genomic_DNA"/>
</dbReference>
<dbReference type="EMBL" id="M63441">
    <property type="protein sequence ID" value="AAA39828.1"/>
    <property type="status" value="JOINED"/>
    <property type="molecule type" value="Genomic_DNA"/>
</dbReference>
<dbReference type="EMBL" id="M63442">
    <property type="protein sequence ID" value="AAA39828.1"/>
    <property type="status" value="JOINED"/>
    <property type="molecule type" value="Genomic_DNA"/>
</dbReference>
<dbReference type="EMBL" id="M63443">
    <property type="protein sequence ID" value="AAA39828.1"/>
    <property type="status" value="JOINED"/>
    <property type="molecule type" value="Genomic_DNA"/>
</dbReference>
<dbReference type="EMBL" id="M63444">
    <property type="protein sequence ID" value="AAA39828.1"/>
    <property type="status" value="JOINED"/>
    <property type="molecule type" value="Genomic_DNA"/>
</dbReference>
<dbReference type="EMBL" id="AK076019">
    <property type="protein sequence ID" value="BAC36124.1"/>
    <property type="molecule type" value="mRNA"/>
</dbReference>
<dbReference type="EMBL" id="AK159680">
    <property type="protein sequence ID" value="BAE35283.1"/>
    <property type="molecule type" value="mRNA"/>
</dbReference>
<dbReference type="EMBL" id="AK165840">
    <property type="protein sequence ID" value="BAE38407.1"/>
    <property type="molecule type" value="mRNA"/>
</dbReference>
<dbReference type="EMBL" id="BC019511">
    <property type="protein sequence ID" value="AAH19511.1"/>
    <property type="molecule type" value="mRNA"/>
</dbReference>
<dbReference type="EMBL" id="S52980">
    <property type="status" value="NOT_ANNOTATED_CDS"/>
    <property type="molecule type" value="Genomic_DNA"/>
</dbReference>
<dbReference type="CCDS" id="CCDS20277.1"/>
<dbReference type="PIR" id="A33267">
    <property type="entry name" value="A33267"/>
</dbReference>
<dbReference type="RefSeq" id="NP_032664.1">
    <property type="nucleotide sequence ID" value="NM_008638.2"/>
</dbReference>
<dbReference type="SMR" id="P18155"/>
<dbReference type="BioGRID" id="201594">
    <property type="interactions" value="4"/>
</dbReference>
<dbReference type="FunCoup" id="P18155">
    <property type="interactions" value="1298"/>
</dbReference>
<dbReference type="STRING" id="10090.ENSMUSP00000005810"/>
<dbReference type="iPTMnet" id="P18155"/>
<dbReference type="PhosphoSitePlus" id="P18155"/>
<dbReference type="PaxDb" id="10090-ENSMUSP00000005810"/>
<dbReference type="PeptideAtlas" id="P18155"/>
<dbReference type="ProteomicsDB" id="290108"/>
<dbReference type="Pumba" id="P18155"/>
<dbReference type="Antibodypedia" id="3292">
    <property type="antibodies" value="201 antibodies from 30 providers"/>
</dbReference>
<dbReference type="DNASU" id="17768"/>
<dbReference type="Ensembl" id="ENSMUST00000005810.9">
    <property type="protein sequence ID" value="ENSMUSP00000005810.7"/>
    <property type="gene ID" value="ENSMUSG00000005667.9"/>
</dbReference>
<dbReference type="GeneID" id="17768"/>
<dbReference type="KEGG" id="mmu:17768"/>
<dbReference type="UCSC" id="uc009cne.2">
    <property type="organism name" value="mouse"/>
</dbReference>
<dbReference type="AGR" id="MGI:1338850"/>
<dbReference type="CTD" id="10797"/>
<dbReference type="MGI" id="MGI:1338850">
    <property type="gene designation" value="Mthfd2"/>
</dbReference>
<dbReference type="VEuPathDB" id="HostDB:ENSMUSG00000005667"/>
<dbReference type="eggNOG" id="KOG0089">
    <property type="taxonomic scope" value="Eukaryota"/>
</dbReference>
<dbReference type="GeneTree" id="ENSGT00940000154863"/>
<dbReference type="HOGENOM" id="CLU_034045_0_1_1"/>
<dbReference type="InParanoid" id="P18155"/>
<dbReference type="OMA" id="VCHILTK"/>
<dbReference type="OrthoDB" id="5126881at2759"/>
<dbReference type="PhylomeDB" id="P18155"/>
<dbReference type="TreeFam" id="TF323998"/>
<dbReference type="BRENDA" id="1.5.1.15">
    <property type="organism ID" value="3474"/>
</dbReference>
<dbReference type="Reactome" id="R-MMU-196757">
    <property type="pathway name" value="Metabolism of folate and pterines"/>
</dbReference>
<dbReference type="SABIO-RK" id="P18155"/>
<dbReference type="BioGRID-ORCS" id="17768">
    <property type="hits" value="9 hits in 79 CRISPR screens"/>
</dbReference>
<dbReference type="ChiTaRS" id="Mthfd2">
    <property type="organism name" value="mouse"/>
</dbReference>
<dbReference type="PRO" id="PR:P18155"/>
<dbReference type="Proteomes" id="UP000000589">
    <property type="component" value="Chromosome 6"/>
</dbReference>
<dbReference type="RNAct" id="P18155">
    <property type="molecule type" value="protein"/>
</dbReference>
<dbReference type="Bgee" id="ENSMUSG00000005667">
    <property type="expression patterns" value="Expressed in lacrimal gland and 250 other cell types or tissues"/>
</dbReference>
<dbReference type="ExpressionAtlas" id="P18155">
    <property type="expression patterns" value="baseline and differential"/>
</dbReference>
<dbReference type="GO" id="GO:0005759">
    <property type="term" value="C:mitochondrial matrix"/>
    <property type="evidence" value="ECO:0000314"/>
    <property type="project" value="MGI"/>
</dbReference>
<dbReference type="GO" id="GO:0005739">
    <property type="term" value="C:mitochondrion"/>
    <property type="evidence" value="ECO:0007005"/>
    <property type="project" value="MGI"/>
</dbReference>
<dbReference type="GO" id="GO:0000287">
    <property type="term" value="F:magnesium ion binding"/>
    <property type="evidence" value="ECO:0000250"/>
    <property type="project" value="UniProtKB"/>
</dbReference>
<dbReference type="GO" id="GO:0004477">
    <property type="term" value="F:methenyltetrahydrofolate cyclohydrolase activity"/>
    <property type="evidence" value="ECO:0000314"/>
    <property type="project" value="UniProtKB"/>
</dbReference>
<dbReference type="GO" id="GO:0004487">
    <property type="term" value="F:methylenetetrahydrofolate dehydrogenase (NAD+) activity"/>
    <property type="evidence" value="ECO:0000314"/>
    <property type="project" value="UniProtKB"/>
</dbReference>
<dbReference type="GO" id="GO:0004488">
    <property type="term" value="F:methylenetetrahydrofolate dehydrogenase (NADP+) activity"/>
    <property type="evidence" value="ECO:0000314"/>
    <property type="project" value="UniProtKB"/>
</dbReference>
<dbReference type="GO" id="GO:0042301">
    <property type="term" value="F:phosphate ion binding"/>
    <property type="evidence" value="ECO:0000250"/>
    <property type="project" value="UniProtKB"/>
</dbReference>
<dbReference type="GO" id="GO:0015943">
    <property type="term" value="P:formate biosynthetic process"/>
    <property type="evidence" value="ECO:0000315"/>
    <property type="project" value="MGI"/>
</dbReference>
<dbReference type="GO" id="GO:0035999">
    <property type="term" value="P:tetrahydrofolate interconversion"/>
    <property type="evidence" value="ECO:0000315"/>
    <property type="project" value="MGI"/>
</dbReference>
<dbReference type="CDD" id="cd01080">
    <property type="entry name" value="NAD_bind_m-THF_DH_Cyclohyd"/>
    <property type="match status" value="1"/>
</dbReference>
<dbReference type="FunFam" id="3.40.50.10860:FF:000001">
    <property type="entry name" value="Bifunctional protein FolD"/>
    <property type="match status" value="1"/>
</dbReference>
<dbReference type="FunFam" id="3.40.50.720:FF:000070">
    <property type="entry name" value="probable bifunctional methylenetetrahydrofolate dehydrogenase/cyclohydrolase 2"/>
    <property type="match status" value="1"/>
</dbReference>
<dbReference type="Gene3D" id="3.40.50.10860">
    <property type="entry name" value="Leucine Dehydrogenase, chain A, domain 1"/>
    <property type="match status" value="1"/>
</dbReference>
<dbReference type="Gene3D" id="3.40.50.720">
    <property type="entry name" value="NAD(P)-binding Rossmann-like Domain"/>
    <property type="match status" value="1"/>
</dbReference>
<dbReference type="HAMAP" id="MF_01576">
    <property type="entry name" value="THF_DHG_CYH"/>
    <property type="match status" value="1"/>
</dbReference>
<dbReference type="InterPro" id="IPR046346">
    <property type="entry name" value="Aminoacid_DH-like_N_sf"/>
</dbReference>
<dbReference type="InterPro" id="IPR036291">
    <property type="entry name" value="NAD(P)-bd_dom_sf"/>
</dbReference>
<dbReference type="InterPro" id="IPR000672">
    <property type="entry name" value="THF_DH/CycHdrlase"/>
</dbReference>
<dbReference type="InterPro" id="IPR020630">
    <property type="entry name" value="THF_DH/CycHdrlase_cat_dom"/>
</dbReference>
<dbReference type="InterPro" id="IPR020867">
    <property type="entry name" value="THF_DH/CycHdrlase_CS"/>
</dbReference>
<dbReference type="InterPro" id="IPR020631">
    <property type="entry name" value="THF_DH/CycHdrlase_NAD-bd_dom"/>
</dbReference>
<dbReference type="PANTHER" id="PTHR48099:SF15">
    <property type="entry name" value="BIFUNCTIONAL METHYLENETETRAHYDROFOLATE DEHYDROGENASE_CYCLOHYDROLASE, MITOCHONDRIAL"/>
    <property type="match status" value="1"/>
</dbReference>
<dbReference type="PANTHER" id="PTHR48099">
    <property type="entry name" value="C-1-TETRAHYDROFOLATE SYNTHASE, CYTOPLASMIC-RELATED"/>
    <property type="match status" value="1"/>
</dbReference>
<dbReference type="Pfam" id="PF00763">
    <property type="entry name" value="THF_DHG_CYH"/>
    <property type="match status" value="1"/>
</dbReference>
<dbReference type="Pfam" id="PF02882">
    <property type="entry name" value="THF_DHG_CYH_C"/>
    <property type="match status" value="1"/>
</dbReference>
<dbReference type="PRINTS" id="PR00085">
    <property type="entry name" value="THFDHDRGNASE"/>
</dbReference>
<dbReference type="SUPFAM" id="SSF53223">
    <property type="entry name" value="Aminoacid dehydrogenase-like, N-terminal domain"/>
    <property type="match status" value="1"/>
</dbReference>
<dbReference type="SUPFAM" id="SSF51735">
    <property type="entry name" value="NAD(P)-binding Rossmann-fold domains"/>
    <property type="match status" value="1"/>
</dbReference>
<dbReference type="PROSITE" id="PS00766">
    <property type="entry name" value="THF_DHG_CYH_1"/>
    <property type="match status" value="1"/>
</dbReference>
<dbReference type="PROSITE" id="PS00767">
    <property type="entry name" value="THF_DHG_CYH_2"/>
    <property type="match status" value="1"/>
</dbReference>
<sequence length="350" mass="37863">MASVSLLSALAVRLLRPTHGCHPRLQPFHLAAVRNEAVVISGRKLAQQIKQEVQQEVEEWVASGNKRPHLSVILVGDNPASHSYVLNKTRAAAEVGINSETIVKPASVSEEELLNSIRKLNNDENVDGLLVQLPLPEHIDERKVCNAVSPDKDVDGFHVINVGRMCLDQYSMLPATPWGVWEIIKRTGIPTLGKNVVVAGRSKNVGMPIAMLLHTDGAHERPGGDATVTISHRYTPKEQLKKHTILADIVISAAGIPNLITADMIKEGAAVIDVGINRVQDPVTAKPKLVGDVDFEGVKKKAGYITPVPGGVGPMTVAMLMKNTIIAAKKVLRPEELEVFKSKQRGVATN</sequence>